<comment type="function">
    <text evidence="2 6 7 8">Sodium- and proton-independent thyroid hormones and aromatic acids transporter (PubMed:11827462, PubMed:18337592, PubMed:28754537). Mediates both uptake and efflux of 3,5,3'-triiodothyronine (T3) and 3,5,3',5'-tetraiodothyronine (T4) with high affinity, suggesting a role in the homeostasis of thyroid hormone levels (PubMed:18337592). Responsible for low affinity bidirectional transport of the aromatic amino acids, such as phenylalanine, tyrosine, tryptophan and L-3,4-dihydroxyphenylalanine (L-dopa) (PubMed:11827462, PubMed:28754537). Plays an important role in homeostasis of aromatic amino acids (By similarity).</text>
</comment>
<comment type="catalytic activity">
    <reaction evidence="7">
        <text>3,3',5-triiodo-L-thyronine(out) = 3,3',5-triiodo-L-thyronine(in)</text>
        <dbReference type="Rhea" id="RHEA:71811"/>
        <dbReference type="ChEBI" id="CHEBI:533015"/>
    </reaction>
    <physiologicalReaction direction="left-to-right" evidence="12">
        <dbReference type="Rhea" id="RHEA:71812"/>
    </physiologicalReaction>
    <physiologicalReaction direction="right-to-left" evidence="12">
        <dbReference type="Rhea" id="RHEA:71813"/>
    </physiologicalReaction>
</comment>
<comment type="catalytic activity">
    <reaction evidence="7">
        <text>L-thyroxine(out) = L-thyroxine(in)</text>
        <dbReference type="Rhea" id="RHEA:71819"/>
        <dbReference type="ChEBI" id="CHEBI:58448"/>
    </reaction>
    <physiologicalReaction direction="left-to-right" evidence="12">
        <dbReference type="Rhea" id="RHEA:71820"/>
    </physiologicalReaction>
    <physiologicalReaction direction="right-to-left" evidence="12">
        <dbReference type="Rhea" id="RHEA:71821"/>
    </physiologicalReaction>
</comment>
<comment type="catalytic activity">
    <reaction evidence="6 8">
        <text>L-tryptophan(in) = L-tryptophan(out)</text>
        <dbReference type="Rhea" id="RHEA:70947"/>
        <dbReference type="ChEBI" id="CHEBI:57912"/>
    </reaction>
    <physiologicalReaction direction="left-to-right" evidence="2">
        <dbReference type="Rhea" id="RHEA:70948"/>
    </physiologicalReaction>
    <physiologicalReaction direction="right-to-left" evidence="11">
        <dbReference type="Rhea" id="RHEA:70949"/>
    </physiologicalReaction>
</comment>
<comment type="catalytic activity">
    <reaction evidence="6">
        <text>L-tyrosine(in) = L-tyrosine(out)</text>
        <dbReference type="Rhea" id="RHEA:68572"/>
        <dbReference type="ChEBI" id="CHEBI:58315"/>
    </reaction>
    <physiologicalReaction direction="left-to-right" evidence="2">
        <dbReference type="Rhea" id="RHEA:68573"/>
    </physiologicalReaction>
    <physiologicalReaction direction="right-to-left" evidence="11">
        <dbReference type="Rhea" id="RHEA:68574"/>
    </physiologicalReaction>
</comment>
<comment type="catalytic activity">
    <reaction evidence="6">
        <text>L-phenylalanine(in) = L-phenylalanine(out)</text>
        <dbReference type="Rhea" id="RHEA:27950"/>
        <dbReference type="ChEBI" id="CHEBI:58095"/>
    </reaction>
    <physiologicalReaction direction="left-to-right" evidence="2">
        <dbReference type="Rhea" id="RHEA:27951"/>
    </physiologicalReaction>
    <physiologicalReaction direction="right-to-left" evidence="11">
        <dbReference type="Rhea" id="RHEA:27952"/>
    </physiologicalReaction>
</comment>
<comment type="biophysicochemical properties">
    <kinetics>
        <KM evidence="6">636 uM for L-tyrosine</KM>
        <KM evidence="6">740 uM for L-phenylalanine</KM>
        <KM evidence="6">1212 uM for L-dopa</KM>
        <KM evidence="6">452 uM for L-tryptophan</KM>
    </kinetics>
</comment>
<comment type="interaction">
    <interactant intactId="EBI-17858931">
        <id>Q8TF71</id>
    </interactant>
    <interactant intactId="EBI-714482">
        <id>Q9BWH2</id>
        <label>FUNDC2</label>
    </interactant>
    <organismsDiffer>false</organismsDiffer>
    <experiments>3</experiments>
</comment>
<comment type="interaction">
    <interactant intactId="EBI-17858931">
        <id>Q8TF71</id>
    </interactant>
    <interactant intactId="EBI-8503746">
        <id>Q9Y5U4</id>
        <label>INSIG2</label>
    </interactant>
    <organismsDiffer>false</organismsDiffer>
    <experiments>3</experiments>
</comment>
<comment type="interaction">
    <interactant intactId="EBI-17858931">
        <id>Q8TF71</id>
    </interactant>
    <interactant intactId="EBI-8638294">
        <id>Q9NUH8</id>
        <label>TMEM14B</label>
    </interactant>
    <organismsDiffer>false</organismsDiffer>
    <experiments>3</experiments>
</comment>
<comment type="subcellular location">
    <subcellularLocation>
        <location evidence="6 7 8">Cell membrane</location>
        <topology evidence="4">Multi-pass membrane protein</topology>
    </subcellularLocation>
    <subcellularLocation>
        <location evidence="3">Basolateral cell membrane</location>
        <topology evidence="4">Multi-pass membrane protein</topology>
    </subcellularLocation>
</comment>
<comment type="tissue specificity">
    <text evidence="6">Strongly expressed in kidney and skeletal muscle and at lower level in placenta and heart.</text>
</comment>
<comment type="PTM">
    <text evidence="1">Not N-glycosylated.</text>
</comment>
<comment type="similarity">
    <text evidence="10">Belongs to the major facilitator superfamily. Monocarboxylate porter (TC 2.A.1.13) family.</text>
</comment>
<comment type="sequence caution" evidence="10">
    <conflict type="erroneous initiation">
        <sequence resource="EMBL-CDS" id="AAH17968"/>
    </conflict>
</comment>
<sequence>MVLSQEEPDSARGTSEAQPLGPAPTGAAPPPGPGPSDSPEAAVEKVEVELAGPATAEPHEPPEPPEGGWGWLVMLAAMWCNGSVFGIQNACGVLFVSMLETFGSKDDDKMVFKTAWVGSLSMGMIFFCCPIVSVFTDLFGCRKTAVVGAAVGFVGLMSSSFVSSIEPLYLTYGIIFACGCSFAYQPSLVILGHYFKKRLGLVNGIVTAGSSVFTILLPLLLRVLIDSVGLFYTLRVLCIFMFVLFLAGFTYRPLATSTKDKESGGSGSSLFSRKKFSPPKKIFNFAIFKVTAYAVWAVGIPLALFGYFVPYVHLMKHVNERFQDEKNKEVVLMCIGVTSGVGRLLFGRIADYVPGVKKVYLQVLSFFFIGLMSMMIPLCSIFGALIAVCLIMGLFDGCFISIMAPIAFELVGAQDVSQAIGFLLGFMSIPMTVGPPIAGLLRDKLGSYDVAFYLAGVPPLIGGAVLCFIPWIHSKKQREISKTTGKEKMEKMLENQNSLLSSSSGMFKKESDSII</sequence>
<evidence type="ECO:0000250" key="1"/>
<evidence type="ECO:0000250" key="2">
    <source>
        <dbReference type="UniProtKB" id="Q3U9N9"/>
    </source>
</evidence>
<evidence type="ECO:0000250" key="3">
    <source>
        <dbReference type="UniProtKB" id="Q91Y77"/>
    </source>
</evidence>
<evidence type="ECO:0000255" key="4"/>
<evidence type="ECO:0000256" key="5">
    <source>
        <dbReference type="SAM" id="MobiDB-lite"/>
    </source>
</evidence>
<evidence type="ECO:0000269" key="6">
    <source>
    </source>
</evidence>
<evidence type="ECO:0000269" key="7">
    <source>
    </source>
</evidence>
<evidence type="ECO:0000269" key="8">
    <source>
    </source>
</evidence>
<evidence type="ECO:0000303" key="9">
    <source>
    </source>
</evidence>
<evidence type="ECO:0000305" key="10"/>
<evidence type="ECO:0000305" key="11">
    <source>
    </source>
</evidence>
<evidence type="ECO:0000305" key="12">
    <source>
    </source>
</evidence>
<evidence type="ECO:0007744" key="13">
    <source>
    </source>
</evidence>
<evidence type="ECO:0007744" key="14">
    <source>
    </source>
</evidence>
<protein>
    <recommendedName>
        <fullName>Monocarboxylate transporter 10</fullName>
        <shortName>MCT 10</shortName>
    </recommendedName>
    <alternativeName>
        <fullName>Aromatic amino acid transporter 1</fullName>
    </alternativeName>
    <alternativeName>
        <fullName>Solute carrier family 16 member 10</fullName>
    </alternativeName>
    <alternativeName>
        <fullName evidence="9">T-type amino acid transporter 1</fullName>
    </alternativeName>
</protein>
<reference key="1">
    <citation type="journal article" date="2002" name="Genomics">
        <title>The human T-type amino acid transporter-1: characterization, gene organization, and chromosomal location.</title>
        <authorList>
            <person name="Kim D.K."/>
            <person name="Kanai Y."/>
            <person name="Matsuo H."/>
            <person name="Kim J.Y."/>
            <person name="Chairoungdua A."/>
            <person name="Kobayashi Y."/>
            <person name="Enomoto A."/>
            <person name="Cha S.H."/>
            <person name="Goya T."/>
            <person name="Endou H."/>
        </authorList>
    </citation>
    <scope>NUCLEOTIDE SEQUENCE [MRNA]</scope>
    <scope>SUBCELLULAR LOCATION</scope>
    <scope>TISSUE SPECIFICITY</scope>
    <scope>FUNCTION</scope>
    <scope>TRANSPORTER ACTIVITY</scope>
    <scope>BIOPHYSICOCHEMICAL PROPERTIES</scope>
    <source>
        <tissue>Thymus</tissue>
    </source>
</reference>
<reference key="2">
    <citation type="journal article" date="2004" name="Nat. Genet.">
        <title>Complete sequencing and characterization of 21,243 full-length human cDNAs.</title>
        <authorList>
            <person name="Ota T."/>
            <person name="Suzuki Y."/>
            <person name="Nishikawa T."/>
            <person name="Otsuki T."/>
            <person name="Sugiyama T."/>
            <person name="Irie R."/>
            <person name="Wakamatsu A."/>
            <person name="Hayashi K."/>
            <person name="Sato H."/>
            <person name="Nagai K."/>
            <person name="Kimura K."/>
            <person name="Makita H."/>
            <person name="Sekine M."/>
            <person name="Obayashi M."/>
            <person name="Nishi T."/>
            <person name="Shibahara T."/>
            <person name="Tanaka T."/>
            <person name="Ishii S."/>
            <person name="Yamamoto J."/>
            <person name="Saito K."/>
            <person name="Kawai Y."/>
            <person name="Isono Y."/>
            <person name="Nakamura Y."/>
            <person name="Nagahari K."/>
            <person name="Murakami K."/>
            <person name="Yasuda T."/>
            <person name="Iwayanagi T."/>
            <person name="Wagatsuma M."/>
            <person name="Shiratori A."/>
            <person name="Sudo H."/>
            <person name="Hosoiri T."/>
            <person name="Kaku Y."/>
            <person name="Kodaira H."/>
            <person name="Kondo H."/>
            <person name="Sugawara M."/>
            <person name="Takahashi M."/>
            <person name="Kanda K."/>
            <person name="Yokoi T."/>
            <person name="Furuya T."/>
            <person name="Kikkawa E."/>
            <person name="Omura Y."/>
            <person name="Abe K."/>
            <person name="Kamihara K."/>
            <person name="Katsuta N."/>
            <person name="Sato K."/>
            <person name="Tanikawa M."/>
            <person name="Yamazaki M."/>
            <person name="Ninomiya K."/>
            <person name="Ishibashi T."/>
            <person name="Yamashita H."/>
            <person name="Murakawa K."/>
            <person name="Fujimori K."/>
            <person name="Tanai H."/>
            <person name="Kimata M."/>
            <person name="Watanabe M."/>
            <person name="Hiraoka S."/>
            <person name="Chiba Y."/>
            <person name="Ishida S."/>
            <person name="Ono Y."/>
            <person name="Takiguchi S."/>
            <person name="Watanabe S."/>
            <person name="Yosida M."/>
            <person name="Hotuta T."/>
            <person name="Kusano J."/>
            <person name="Kanehori K."/>
            <person name="Takahashi-Fujii A."/>
            <person name="Hara H."/>
            <person name="Tanase T.-O."/>
            <person name="Nomura Y."/>
            <person name="Togiya S."/>
            <person name="Komai F."/>
            <person name="Hara R."/>
            <person name="Takeuchi K."/>
            <person name="Arita M."/>
            <person name="Imose N."/>
            <person name="Musashino K."/>
            <person name="Yuuki H."/>
            <person name="Oshima A."/>
            <person name="Sasaki N."/>
            <person name="Aotsuka S."/>
            <person name="Yoshikawa Y."/>
            <person name="Matsunawa H."/>
            <person name="Ichihara T."/>
            <person name="Shiohata N."/>
            <person name="Sano S."/>
            <person name="Moriya S."/>
            <person name="Momiyama H."/>
            <person name="Satoh N."/>
            <person name="Takami S."/>
            <person name="Terashima Y."/>
            <person name="Suzuki O."/>
            <person name="Nakagawa S."/>
            <person name="Senoh A."/>
            <person name="Mizoguchi H."/>
            <person name="Goto Y."/>
            <person name="Shimizu F."/>
            <person name="Wakebe H."/>
            <person name="Hishigaki H."/>
            <person name="Watanabe T."/>
            <person name="Sugiyama A."/>
            <person name="Takemoto M."/>
            <person name="Kawakami B."/>
            <person name="Yamazaki M."/>
            <person name="Watanabe K."/>
            <person name="Kumagai A."/>
            <person name="Itakura S."/>
            <person name="Fukuzumi Y."/>
            <person name="Fujimori Y."/>
            <person name="Komiyama M."/>
            <person name="Tashiro H."/>
            <person name="Tanigami A."/>
            <person name="Fujiwara T."/>
            <person name="Ono T."/>
            <person name="Yamada K."/>
            <person name="Fujii Y."/>
            <person name="Ozaki K."/>
            <person name="Hirao M."/>
            <person name="Ohmori Y."/>
            <person name="Kawabata A."/>
            <person name="Hikiji T."/>
            <person name="Kobatake N."/>
            <person name="Inagaki H."/>
            <person name="Ikema Y."/>
            <person name="Okamoto S."/>
            <person name="Okitani R."/>
            <person name="Kawakami T."/>
            <person name="Noguchi S."/>
            <person name="Itoh T."/>
            <person name="Shigeta K."/>
            <person name="Senba T."/>
            <person name="Matsumura K."/>
            <person name="Nakajima Y."/>
            <person name="Mizuno T."/>
            <person name="Morinaga M."/>
            <person name="Sasaki M."/>
            <person name="Togashi T."/>
            <person name="Oyama M."/>
            <person name="Hata H."/>
            <person name="Watanabe M."/>
            <person name="Komatsu T."/>
            <person name="Mizushima-Sugano J."/>
            <person name="Satoh T."/>
            <person name="Shirai Y."/>
            <person name="Takahashi Y."/>
            <person name="Nakagawa K."/>
            <person name="Okumura K."/>
            <person name="Nagase T."/>
            <person name="Nomura N."/>
            <person name="Kikuchi H."/>
            <person name="Masuho Y."/>
            <person name="Yamashita R."/>
            <person name="Nakai K."/>
            <person name="Yada T."/>
            <person name="Nakamura Y."/>
            <person name="Ohara O."/>
            <person name="Isogai T."/>
            <person name="Sugano S."/>
        </authorList>
    </citation>
    <scope>NUCLEOTIDE SEQUENCE [LARGE SCALE MRNA]</scope>
    <source>
        <tissue>Thymus</tissue>
    </source>
</reference>
<reference key="3">
    <citation type="journal article" date="2003" name="Nature">
        <title>The DNA sequence and analysis of human chromosome 6.</title>
        <authorList>
            <person name="Mungall A.J."/>
            <person name="Palmer S.A."/>
            <person name="Sims S.K."/>
            <person name="Edwards C.A."/>
            <person name="Ashurst J.L."/>
            <person name="Wilming L."/>
            <person name="Jones M.C."/>
            <person name="Horton R."/>
            <person name="Hunt S.E."/>
            <person name="Scott C.E."/>
            <person name="Gilbert J.G.R."/>
            <person name="Clamp M.E."/>
            <person name="Bethel G."/>
            <person name="Milne S."/>
            <person name="Ainscough R."/>
            <person name="Almeida J.P."/>
            <person name="Ambrose K.D."/>
            <person name="Andrews T.D."/>
            <person name="Ashwell R.I.S."/>
            <person name="Babbage A.K."/>
            <person name="Bagguley C.L."/>
            <person name="Bailey J."/>
            <person name="Banerjee R."/>
            <person name="Barker D.J."/>
            <person name="Barlow K.F."/>
            <person name="Bates K."/>
            <person name="Beare D.M."/>
            <person name="Beasley H."/>
            <person name="Beasley O."/>
            <person name="Bird C.P."/>
            <person name="Blakey S.E."/>
            <person name="Bray-Allen S."/>
            <person name="Brook J."/>
            <person name="Brown A.J."/>
            <person name="Brown J.Y."/>
            <person name="Burford D.C."/>
            <person name="Burrill W."/>
            <person name="Burton J."/>
            <person name="Carder C."/>
            <person name="Carter N.P."/>
            <person name="Chapman J.C."/>
            <person name="Clark S.Y."/>
            <person name="Clark G."/>
            <person name="Clee C.M."/>
            <person name="Clegg S."/>
            <person name="Cobley V."/>
            <person name="Collier R.E."/>
            <person name="Collins J.E."/>
            <person name="Colman L.K."/>
            <person name="Corby N.R."/>
            <person name="Coville G.J."/>
            <person name="Culley K.M."/>
            <person name="Dhami P."/>
            <person name="Davies J."/>
            <person name="Dunn M."/>
            <person name="Earthrowl M.E."/>
            <person name="Ellington A.E."/>
            <person name="Evans K.A."/>
            <person name="Faulkner L."/>
            <person name="Francis M.D."/>
            <person name="Frankish A."/>
            <person name="Frankland J."/>
            <person name="French L."/>
            <person name="Garner P."/>
            <person name="Garnett J."/>
            <person name="Ghori M.J."/>
            <person name="Gilby L.M."/>
            <person name="Gillson C.J."/>
            <person name="Glithero R.J."/>
            <person name="Grafham D.V."/>
            <person name="Grant M."/>
            <person name="Gribble S."/>
            <person name="Griffiths C."/>
            <person name="Griffiths M.N.D."/>
            <person name="Hall R."/>
            <person name="Halls K.S."/>
            <person name="Hammond S."/>
            <person name="Harley J.L."/>
            <person name="Hart E.A."/>
            <person name="Heath P.D."/>
            <person name="Heathcott R."/>
            <person name="Holmes S.J."/>
            <person name="Howden P.J."/>
            <person name="Howe K.L."/>
            <person name="Howell G.R."/>
            <person name="Huckle E."/>
            <person name="Humphray S.J."/>
            <person name="Humphries M.D."/>
            <person name="Hunt A.R."/>
            <person name="Johnson C.M."/>
            <person name="Joy A.A."/>
            <person name="Kay M."/>
            <person name="Keenan S.J."/>
            <person name="Kimberley A.M."/>
            <person name="King A."/>
            <person name="Laird G.K."/>
            <person name="Langford C."/>
            <person name="Lawlor S."/>
            <person name="Leongamornlert D.A."/>
            <person name="Leversha M."/>
            <person name="Lloyd C.R."/>
            <person name="Lloyd D.M."/>
            <person name="Loveland J.E."/>
            <person name="Lovell J."/>
            <person name="Martin S."/>
            <person name="Mashreghi-Mohammadi M."/>
            <person name="Maslen G.L."/>
            <person name="Matthews L."/>
            <person name="McCann O.T."/>
            <person name="McLaren S.J."/>
            <person name="McLay K."/>
            <person name="McMurray A."/>
            <person name="Moore M.J.F."/>
            <person name="Mullikin J.C."/>
            <person name="Niblett D."/>
            <person name="Nickerson T."/>
            <person name="Novik K.L."/>
            <person name="Oliver K."/>
            <person name="Overton-Larty E.K."/>
            <person name="Parker A."/>
            <person name="Patel R."/>
            <person name="Pearce A.V."/>
            <person name="Peck A.I."/>
            <person name="Phillimore B.J.C.T."/>
            <person name="Phillips S."/>
            <person name="Plumb R.W."/>
            <person name="Porter K.M."/>
            <person name="Ramsey Y."/>
            <person name="Ranby S.A."/>
            <person name="Rice C.M."/>
            <person name="Ross M.T."/>
            <person name="Searle S.M."/>
            <person name="Sehra H.K."/>
            <person name="Sheridan E."/>
            <person name="Skuce C.D."/>
            <person name="Smith S."/>
            <person name="Smith M."/>
            <person name="Spraggon L."/>
            <person name="Squares S.L."/>
            <person name="Steward C.A."/>
            <person name="Sycamore N."/>
            <person name="Tamlyn-Hall G."/>
            <person name="Tester J."/>
            <person name="Theaker A.J."/>
            <person name="Thomas D.W."/>
            <person name="Thorpe A."/>
            <person name="Tracey A."/>
            <person name="Tromans A."/>
            <person name="Tubby B."/>
            <person name="Wall M."/>
            <person name="Wallis J.M."/>
            <person name="West A.P."/>
            <person name="White S.S."/>
            <person name="Whitehead S.L."/>
            <person name="Whittaker H."/>
            <person name="Wild A."/>
            <person name="Willey D.J."/>
            <person name="Wilmer T.E."/>
            <person name="Wood J.M."/>
            <person name="Wray P.W."/>
            <person name="Wyatt J.C."/>
            <person name="Young L."/>
            <person name="Younger R.M."/>
            <person name="Bentley D.R."/>
            <person name="Coulson A."/>
            <person name="Durbin R.M."/>
            <person name="Hubbard T."/>
            <person name="Sulston J.E."/>
            <person name="Dunham I."/>
            <person name="Rogers J."/>
            <person name="Beck S."/>
        </authorList>
    </citation>
    <scope>NUCLEOTIDE SEQUENCE [LARGE SCALE GENOMIC DNA]</scope>
</reference>
<reference key="4">
    <citation type="submission" date="2005-09" db="EMBL/GenBank/DDBJ databases">
        <authorList>
            <person name="Mural R.J."/>
            <person name="Istrail S."/>
            <person name="Sutton G.G."/>
            <person name="Florea L."/>
            <person name="Halpern A.L."/>
            <person name="Mobarry C.M."/>
            <person name="Lippert R."/>
            <person name="Walenz B."/>
            <person name="Shatkay H."/>
            <person name="Dew I."/>
            <person name="Miller J.R."/>
            <person name="Flanigan M.J."/>
            <person name="Edwards N.J."/>
            <person name="Bolanos R."/>
            <person name="Fasulo D."/>
            <person name="Halldorsson B.V."/>
            <person name="Hannenhalli S."/>
            <person name="Turner R."/>
            <person name="Yooseph S."/>
            <person name="Lu F."/>
            <person name="Nusskern D.R."/>
            <person name="Shue B.C."/>
            <person name="Zheng X.H."/>
            <person name="Zhong F."/>
            <person name="Delcher A.L."/>
            <person name="Huson D.H."/>
            <person name="Kravitz S.A."/>
            <person name="Mouchard L."/>
            <person name="Reinert K."/>
            <person name="Remington K.A."/>
            <person name="Clark A.G."/>
            <person name="Waterman M.S."/>
            <person name="Eichler E.E."/>
            <person name="Adams M.D."/>
            <person name="Hunkapiller M.W."/>
            <person name="Myers E.W."/>
            <person name="Venter J.C."/>
        </authorList>
    </citation>
    <scope>NUCLEOTIDE SEQUENCE [LARGE SCALE GENOMIC DNA]</scope>
</reference>
<reference key="5">
    <citation type="journal article" date="2004" name="Genome Res.">
        <title>The status, quality, and expansion of the NIH full-length cDNA project: the Mammalian Gene Collection (MGC).</title>
        <authorList>
            <consortium name="The MGC Project Team"/>
        </authorList>
    </citation>
    <scope>NUCLEOTIDE SEQUENCE [LARGE SCALE MRNA]</scope>
    <source>
        <tissue>Placenta</tissue>
        <tissue>Prostate</tissue>
        <tissue>Testis</tissue>
    </source>
</reference>
<reference key="6">
    <citation type="journal article" date="2011" name="Sci. Signal.">
        <title>System-wide temporal characterization of the proteome and phosphoproteome of human embryonic stem cell differentiation.</title>
        <authorList>
            <person name="Rigbolt K.T."/>
            <person name="Prokhorova T.A."/>
            <person name="Akimov V."/>
            <person name="Henningsen J."/>
            <person name="Johansen P.T."/>
            <person name="Kratchmarova I."/>
            <person name="Kassem M."/>
            <person name="Mann M."/>
            <person name="Olsen J.V."/>
            <person name="Blagoev B."/>
        </authorList>
    </citation>
    <scope>PHOSPHORYLATION [LARGE SCALE ANALYSIS] AT SER-498</scope>
    <scope>IDENTIFICATION BY MASS SPECTROMETRY [LARGE SCALE ANALYSIS]</scope>
</reference>
<reference key="7">
    <citation type="journal article" date="2014" name="J. Proteomics">
        <title>An enzyme assisted RP-RPLC approach for in-depth analysis of human liver phosphoproteome.</title>
        <authorList>
            <person name="Bian Y."/>
            <person name="Song C."/>
            <person name="Cheng K."/>
            <person name="Dong M."/>
            <person name="Wang F."/>
            <person name="Huang J."/>
            <person name="Sun D."/>
            <person name="Wang L."/>
            <person name="Ye M."/>
            <person name="Zou H."/>
        </authorList>
    </citation>
    <scope>PHOSPHORYLATION [LARGE SCALE ANALYSIS] AT SER-498 AND SER-501</scope>
    <scope>IDENTIFICATION BY MASS SPECTROMETRY [LARGE SCALE ANALYSIS]</scope>
    <source>
        <tissue>Liver</tissue>
    </source>
</reference>
<reference key="8">
    <citation type="journal article" date="2008" name="Mol. Endocrinol.">
        <title>Effective cellular uptake and efflux of thyroid hormone by human monocarboxylate transporter 10.</title>
        <authorList>
            <person name="Friesema E.C."/>
            <person name="Jansen J."/>
            <person name="Jachtenberg J.W."/>
            <person name="Visser W.E."/>
            <person name="Kester M.H."/>
            <person name="Visser T.J."/>
        </authorList>
    </citation>
    <scope>SUBCELLULAR LOCATION</scope>
    <scope>FUNCTION</scope>
    <scope>TRANSPORTER ACTIVITY</scope>
</reference>
<reference key="9">
    <citation type="journal article" date="2017" name="Biochim. Biophys. Acta">
        <title>Functional analysis of human aromatic amino acid transporter MCT10/TAT1 using the yeast Saccharomyces cerevisiae.</title>
        <authorList>
            <person name="Uemura S."/>
            <person name="Mochizuki T."/>
            <person name="Kurosaka G."/>
            <person name="Hashimoto T."/>
            <person name="Masukawa Y."/>
            <person name="Abe F."/>
        </authorList>
    </citation>
    <scope>FUNCTION</scope>
    <scope>TRANSPORTER ACTIVITY</scope>
    <scope>SUBCELLULAR LOCATION</scope>
    <scope>MUTAGENESIS OF ASN-81</scope>
</reference>
<name>MOT10_HUMAN</name>
<accession>Q8TF71</accession>
<accession>B3KWY0</accession>
<accession>Q6ZMG0</accession>
<accession>Q8WVI5</accession>
<feature type="chain" id="PRO_0000314253" description="Monocarboxylate transporter 10">
    <location>
        <begin position="1"/>
        <end position="515"/>
    </location>
</feature>
<feature type="topological domain" description="Cytoplasmic" evidence="10">
    <location>
        <begin position="1"/>
        <end position="66"/>
    </location>
</feature>
<feature type="transmembrane region" description="Helical; Name=1" evidence="4">
    <location>
        <begin position="67"/>
        <end position="87"/>
    </location>
</feature>
<feature type="topological domain" description="Extracellular" evidence="10">
    <location>
        <begin position="88"/>
        <end position="114"/>
    </location>
</feature>
<feature type="transmembrane region" description="Helical; Name=2" evidence="4">
    <location>
        <begin position="115"/>
        <end position="135"/>
    </location>
</feature>
<feature type="topological domain" description="Cytoplasmic" evidence="10">
    <location>
        <begin position="136"/>
        <end position="144"/>
    </location>
</feature>
<feature type="transmembrane region" description="Helical; Name=3" evidence="4">
    <location>
        <begin position="145"/>
        <end position="165"/>
    </location>
</feature>
<feature type="topological domain" description="Extracellular" evidence="10">
    <location>
        <begin position="166"/>
        <end position="171"/>
    </location>
</feature>
<feature type="transmembrane region" description="Helical; Name=4" evidence="4">
    <location>
        <begin position="172"/>
        <end position="192"/>
    </location>
</feature>
<feature type="topological domain" description="Cytoplasmic" evidence="10">
    <location>
        <begin position="193"/>
        <end position="200"/>
    </location>
</feature>
<feature type="transmembrane region" description="Helical; Name=5" evidence="4">
    <location>
        <begin position="201"/>
        <end position="221"/>
    </location>
</feature>
<feature type="topological domain" description="Extracellular" evidence="10">
    <location>
        <begin position="222"/>
        <end position="228"/>
    </location>
</feature>
<feature type="transmembrane region" description="Helical; Name=6" evidence="4">
    <location>
        <begin position="229"/>
        <end position="249"/>
    </location>
</feature>
<feature type="topological domain" description="Cytoplasmic" evidence="10">
    <location>
        <begin position="250"/>
        <end position="291"/>
    </location>
</feature>
<feature type="transmembrane region" description="Helical; Name=7" evidence="4">
    <location>
        <begin position="292"/>
        <end position="312"/>
    </location>
</feature>
<feature type="topological domain" description="Extracellular" evidence="10">
    <location>
        <begin position="313"/>
        <end position="329"/>
    </location>
</feature>
<feature type="transmembrane region" description="Helical; Name=8" evidence="4">
    <location>
        <begin position="330"/>
        <end position="350"/>
    </location>
</feature>
<feature type="topological domain" description="Cytoplasmic" evidence="10">
    <location>
        <position position="351"/>
    </location>
</feature>
<feature type="transmembrane region" description="Helical; Name=9" evidence="4">
    <location>
        <begin position="352"/>
        <end position="372"/>
    </location>
</feature>
<feature type="topological domain" description="Extracellular" evidence="10">
    <location>
        <begin position="373"/>
        <end position="396"/>
    </location>
</feature>
<feature type="transmembrane region" description="Helical; Name=10" evidence="4">
    <location>
        <begin position="397"/>
        <end position="417"/>
    </location>
</feature>
<feature type="topological domain" description="Cytoplasmic" evidence="10">
    <location>
        <begin position="418"/>
        <end position="419"/>
    </location>
</feature>
<feature type="transmembrane region" description="Helical; Name=11" evidence="4">
    <location>
        <begin position="420"/>
        <end position="440"/>
    </location>
</feature>
<feature type="topological domain" description="Extracellular" evidence="10">
    <location>
        <begin position="441"/>
        <end position="451"/>
    </location>
</feature>
<feature type="transmembrane region" description="Helical; Name=12" evidence="4">
    <location>
        <begin position="452"/>
        <end position="472"/>
    </location>
</feature>
<feature type="topological domain" description="Cytoplasmic" evidence="10">
    <location>
        <begin position="473"/>
        <end position="515"/>
    </location>
</feature>
<feature type="region of interest" description="Disordered" evidence="5">
    <location>
        <begin position="1"/>
        <end position="48"/>
    </location>
</feature>
<feature type="compositionally biased region" description="Low complexity" evidence="5">
    <location>
        <begin position="17"/>
        <end position="26"/>
    </location>
</feature>
<feature type="compositionally biased region" description="Pro residues" evidence="5">
    <location>
        <begin position="27"/>
        <end position="36"/>
    </location>
</feature>
<feature type="modified residue" description="Phosphoserine" evidence="3">
    <location>
        <position position="263"/>
    </location>
</feature>
<feature type="modified residue" description="Phosphoserine" evidence="13 14">
    <location>
        <position position="498"/>
    </location>
</feature>
<feature type="modified residue" description="Phosphoserine" evidence="14">
    <location>
        <position position="501"/>
    </location>
</feature>
<feature type="modified residue" description="Phosphoserine" evidence="2">
    <location>
        <position position="503"/>
    </location>
</feature>
<feature type="modified residue" description="Phosphoserine" evidence="2">
    <location>
        <position position="504"/>
    </location>
</feature>
<feature type="sequence variant" id="VAR_037874" description="In dbSNP:rs17072442.">
    <original>K</original>
    <variation>Q</variation>
    <location>
        <position position="508"/>
    </location>
</feature>
<feature type="mutagenesis site" description="Does not affect subcellular localization. Abolishes tryptophan import activity." evidence="8">
    <original>N</original>
    <variation>K</variation>
    <location>
        <position position="81"/>
    </location>
</feature>
<feature type="sequence conflict" description="In Ref. 5; AAH17968." evidence="10" ref="5">
    <original>F</original>
    <variation>L</variation>
    <location>
        <position position="422"/>
    </location>
</feature>
<feature type="sequence conflict" description="In Ref. 2; BAD18768." evidence="10" ref="2">
    <original>M</original>
    <variation>T</variation>
    <location>
        <position position="431"/>
    </location>
</feature>
<feature type="sequence conflict" description="In Ref. 2; BAD18768." evidence="10" ref="2">
    <original>D</original>
    <variation>G</variation>
    <location>
        <position position="443"/>
    </location>
</feature>
<feature type="sequence conflict" description="In Ref. 5; AAH17968." evidence="10" ref="5">
    <original>K</original>
    <variation>E</variation>
    <location>
        <position position="508"/>
    </location>
</feature>
<keyword id="KW-1003">Cell membrane</keyword>
<keyword id="KW-0472">Membrane</keyword>
<keyword id="KW-0597">Phosphoprotein</keyword>
<keyword id="KW-1267">Proteomics identification</keyword>
<keyword id="KW-1185">Reference proteome</keyword>
<keyword id="KW-0812">Transmembrane</keyword>
<keyword id="KW-1133">Transmembrane helix</keyword>
<keyword id="KW-0813">Transport</keyword>
<gene>
    <name type="primary">SLC16A10</name>
    <name type="synonym">MCT10</name>
    <name evidence="9" type="synonym">TAT1</name>
</gene>
<dbReference type="EMBL" id="AB057445">
    <property type="protein sequence ID" value="BAB84670.1"/>
    <property type="molecule type" value="mRNA"/>
</dbReference>
<dbReference type="EMBL" id="AK126183">
    <property type="protein sequence ID" value="BAG54292.1"/>
    <property type="molecule type" value="mRNA"/>
</dbReference>
<dbReference type="EMBL" id="AK172789">
    <property type="protein sequence ID" value="BAD18768.1"/>
    <property type="molecule type" value="mRNA"/>
</dbReference>
<dbReference type="EMBL" id="AL360227">
    <property type="status" value="NOT_ANNOTATED_CDS"/>
    <property type="molecule type" value="Genomic_DNA"/>
</dbReference>
<dbReference type="EMBL" id="CH471051">
    <property type="protein sequence ID" value="EAW48298.1"/>
    <property type="molecule type" value="Genomic_DNA"/>
</dbReference>
<dbReference type="EMBL" id="BC017968">
    <property type="protein sequence ID" value="AAH17968.1"/>
    <property type="status" value="ALT_INIT"/>
    <property type="molecule type" value="mRNA"/>
</dbReference>
<dbReference type="EMBL" id="BC066985">
    <property type="protein sequence ID" value="AAH66985.1"/>
    <property type="molecule type" value="mRNA"/>
</dbReference>
<dbReference type="CCDS" id="CCDS5089.1"/>
<dbReference type="RefSeq" id="NP_061063.2">
    <property type="nucleotide sequence ID" value="NM_018593.4"/>
</dbReference>
<dbReference type="SMR" id="Q8TF71"/>
<dbReference type="BioGRID" id="125582">
    <property type="interactions" value="39"/>
</dbReference>
<dbReference type="FunCoup" id="Q8TF71">
    <property type="interactions" value="788"/>
</dbReference>
<dbReference type="IntAct" id="Q8TF71">
    <property type="interactions" value="26"/>
</dbReference>
<dbReference type="STRING" id="9606.ENSP00000357844"/>
<dbReference type="DrugBank" id="DB02952">
    <property type="generic name" value="2-aminoisobutyric acid"/>
</dbReference>
<dbReference type="DrugBank" id="DB00160">
    <property type="generic name" value="Alanine"/>
</dbReference>
<dbReference type="DrugBank" id="DB00125">
    <property type="generic name" value="Arginine"/>
</dbReference>
<dbReference type="DrugBank" id="DB00174">
    <property type="generic name" value="Asparagine"/>
</dbReference>
<dbReference type="DrugBank" id="DB00128">
    <property type="generic name" value="Aspartic acid"/>
</dbReference>
<dbReference type="DrugBank" id="DB03107">
    <property type="generic name" value="beta-Alanine"/>
</dbReference>
<dbReference type="DrugBank" id="DB00151">
    <property type="generic name" value="Cysteine"/>
</dbReference>
<dbReference type="DrugBank" id="DB00138">
    <property type="generic name" value="Cystine"/>
</dbReference>
<dbReference type="DrugBank" id="DB01786">
    <property type="generic name" value="D-Alanine"/>
</dbReference>
<dbReference type="DrugBank" id="DB01746">
    <property type="generic name" value="D-Leucine"/>
</dbReference>
<dbReference type="DrugBank" id="DB02556">
    <property type="generic name" value="D-Phenylalanine"/>
</dbReference>
<dbReference type="DrugBank" id="DB03929">
    <property type="generic name" value="D-Serine"/>
</dbReference>
<dbReference type="DrugBank" id="DB03225">
    <property type="generic name" value="D-Tryptophan"/>
</dbReference>
<dbReference type="DrugBank" id="DB03839">
    <property type="generic name" value="D-Tyrosine"/>
</dbReference>
<dbReference type="DrugBank" id="DB06262">
    <property type="generic name" value="Droxidopa"/>
</dbReference>
<dbReference type="DrugBank" id="DB00142">
    <property type="generic name" value="Glutamic acid"/>
</dbReference>
<dbReference type="DrugBank" id="DB00145">
    <property type="generic name" value="Glycine"/>
</dbReference>
<dbReference type="DrugBank" id="DB00117">
    <property type="generic name" value="Histidine"/>
</dbReference>
<dbReference type="DrugBank" id="DB00167">
    <property type="generic name" value="Isoleucine"/>
</dbReference>
<dbReference type="DrugBank" id="DB00130">
    <property type="generic name" value="L-Glutamine"/>
</dbReference>
<dbReference type="DrugBank" id="DB04398">
    <property type="generic name" value="Lactic acid"/>
</dbReference>
<dbReference type="DrugBank" id="DB00149">
    <property type="generic name" value="Leucine"/>
</dbReference>
<dbReference type="DrugBank" id="DB01235">
    <property type="generic name" value="Levodopa"/>
</dbReference>
<dbReference type="DrugBank" id="DB00279">
    <property type="generic name" value="Liothyronine"/>
</dbReference>
<dbReference type="DrugBank" id="DB01583">
    <property type="generic name" value="Liotrix"/>
</dbReference>
<dbReference type="DrugBank" id="DB00123">
    <property type="generic name" value="Lysine"/>
</dbReference>
<dbReference type="DrugBank" id="DB00134">
    <property type="generic name" value="Methionine"/>
</dbReference>
<dbReference type="DrugBank" id="DB00120">
    <property type="generic name" value="Phenylalanine"/>
</dbReference>
<dbReference type="DrugBank" id="DB00172">
    <property type="generic name" value="Proline"/>
</dbReference>
<dbReference type="DrugBank" id="DB00119">
    <property type="generic name" value="Pyruvic acid"/>
</dbReference>
<dbReference type="DrugBank" id="DB00133">
    <property type="generic name" value="Serine"/>
</dbReference>
<dbReference type="DrugBank" id="DB00156">
    <property type="generic name" value="Threonine"/>
</dbReference>
<dbReference type="DrugBank" id="DB00150">
    <property type="generic name" value="Tryptophan"/>
</dbReference>
<dbReference type="DrugBank" id="DB00135">
    <property type="generic name" value="Tyrosine"/>
</dbReference>
<dbReference type="DrugBank" id="DB00161">
    <property type="generic name" value="Valine"/>
</dbReference>
<dbReference type="TCDB" id="2.A.1.13.8">
    <property type="family name" value="the major facilitator superfamily (mfs)"/>
</dbReference>
<dbReference type="GlyGen" id="Q8TF71">
    <property type="glycosylation" value="1 site"/>
</dbReference>
<dbReference type="iPTMnet" id="Q8TF71"/>
<dbReference type="PhosphoSitePlus" id="Q8TF71"/>
<dbReference type="BioMuta" id="SLC16A10"/>
<dbReference type="DMDM" id="74751472"/>
<dbReference type="jPOST" id="Q8TF71"/>
<dbReference type="MassIVE" id="Q8TF71"/>
<dbReference type="PaxDb" id="9606-ENSP00000357844"/>
<dbReference type="PeptideAtlas" id="Q8TF71"/>
<dbReference type="ProteomicsDB" id="74571"/>
<dbReference type="Pumba" id="Q8TF71"/>
<dbReference type="Antibodypedia" id="19300">
    <property type="antibodies" value="112 antibodies from 21 providers"/>
</dbReference>
<dbReference type="DNASU" id="117247"/>
<dbReference type="Ensembl" id="ENST00000368851.10">
    <property type="protein sequence ID" value="ENSP00000357844.4"/>
    <property type="gene ID" value="ENSG00000112394.18"/>
</dbReference>
<dbReference type="GeneID" id="117247"/>
<dbReference type="KEGG" id="hsa:117247"/>
<dbReference type="MANE-Select" id="ENST00000368851.10">
    <property type="protein sequence ID" value="ENSP00000357844.4"/>
    <property type="RefSeq nucleotide sequence ID" value="NM_018593.5"/>
    <property type="RefSeq protein sequence ID" value="NP_061063.2"/>
</dbReference>
<dbReference type="UCSC" id="uc003pus.4">
    <property type="organism name" value="human"/>
</dbReference>
<dbReference type="AGR" id="HGNC:17027"/>
<dbReference type="CTD" id="117247"/>
<dbReference type="DisGeNET" id="117247"/>
<dbReference type="GeneCards" id="SLC16A10"/>
<dbReference type="HGNC" id="HGNC:17027">
    <property type="gene designation" value="SLC16A10"/>
</dbReference>
<dbReference type="HPA" id="ENSG00000112394">
    <property type="expression patterns" value="Tissue enhanced (pancreas, skeletal muscle)"/>
</dbReference>
<dbReference type="MIM" id="607550">
    <property type="type" value="gene"/>
</dbReference>
<dbReference type="neXtProt" id="NX_Q8TF71"/>
<dbReference type="OpenTargets" id="ENSG00000112394"/>
<dbReference type="PharmGKB" id="PA38197"/>
<dbReference type="VEuPathDB" id="HostDB:ENSG00000112394"/>
<dbReference type="eggNOG" id="KOG2504">
    <property type="taxonomic scope" value="Eukaryota"/>
</dbReference>
<dbReference type="GeneTree" id="ENSGT00940000157966"/>
<dbReference type="HOGENOM" id="CLU_001265_59_1_1"/>
<dbReference type="InParanoid" id="Q8TF71"/>
<dbReference type="OMA" id="LSYRIWA"/>
<dbReference type="OrthoDB" id="6499973at2759"/>
<dbReference type="PAN-GO" id="Q8TF71">
    <property type="GO annotations" value="1 GO annotation based on evolutionary models"/>
</dbReference>
<dbReference type="PhylomeDB" id="Q8TF71"/>
<dbReference type="TreeFam" id="TF313792"/>
<dbReference type="PathwayCommons" id="Q8TF71"/>
<dbReference type="Reactome" id="R-HSA-352230">
    <property type="pathway name" value="Amino acid transport across the plasma membrane"/>
</dbReference>
<dbReference type="SignaLink" id="Q8TF71"/>
<dbReference type="BioGRID-ORCS" id="117247">
    <property type="hits" value="11 hits in 1151 CRISPR screens"/>
</dbReference>
<dbReference type="ChiTaRS" id="SLC16A10">
    <property type="organism name" value="human"/>
</dbReference>
<dbReference type="GeneWiki" id="SLC16A10"/>
<dbReference type="GenomeRNAi" id="117247"/>
<dbReference type="Pharos" id="Q8TF71">
    <property type="development level" value="Tbio"/>
</dbReference>
<dbReference type="PRO" id="PR:Q8TF71"/>
<dbReference type="Proteomes" id="UP000005640">
    <property type="component" value="Chromosome 6"/>
</dbReference>
<dbReference type="RNAct" id="Q8TF71">
    <property type="molecule type" value="protein"/>
</dbReference>
<dbReference type="Bgee" id="ENSG00000112394">
    <property type="expression patterns" value="Expressed in gastrocnemius and 135 other cell types or tissues"/>
</dbReference>
<dbReference type="ExpressionAtlas" id="Q8TF71">
    <property type="expression patterns" value="baseline and differential"/>
</dbReference>
<dbReference type="GO" id="GO:0016323">
    <property type="term" value="C:basolateral plasma membrane"/>
    <property type="evidence" value="ECO:0000314"/>
    <property type="project" value="ARUK-UCL"/>
</dbReference>
<dbReference type="GO" id="GO:0030054">
    <property type="term" value="C:cell junction"/>
    <property type="evidence" value="ECO:0000314"/>
    <property type="project" value="HPA"/>
</dbReference>
<dbReference type="GO" id="GO:0043231">
    <property type="term" value="C:intracellular membrane-bounded organelle"/>
    <property type="evidence" value="ECO:0000314"/>
    <property type="project" value="HPA"/>
</dbReference>
<dbReference type="GO" id="GO:0005886">
    <property type="term" value="C:plasma membrane"/>
    <property type="evidence" value="ECO:0000314"/>
    <property type="project" value="UniProtKB"/>
</dbReference>
<dbReference type="GO" id="GO:0015171">
    <property type="term" value="F:amino acid transmembrane transporter activity"/>
    <property type="evidence" value="ECO:0000304"/>
    <property type="project" value="Reactome"/>
</dbReference>
<dbReference type="GO" id="GO:0015173">
    <property type="term" value="F:aromatic amino acid transmembrane transporter activity"/>
    <property type="evidence" value="ECO:0000314"/>
    <property type="project" value="UniProtKB"/>
</dbReference>
<dbReference type="GO" id="GO:0015192">
    <property type="term" value="F:L-phenylalanine transmembrane transporter activity"/>
    <property type="evidence" value="ECO:0000314"/>
    <property type="project" value="UniProtKB"/>
</dbReference>
<dbReference type="GO" id="GO:0015196">
    <property type="term" value="F:L-tryptophan transmembrane transporter activity"/>
    <property type="evidence" value="ECO:0000314"/>
    <property type="project" value="UniProtKB"/>
</dbReference>
<dbReference type="GO" id="GO:0005302">
    <property type="term" value="F:L-tyrosine transmembrane transporter activity"/>
    <property type="evidence" value="ECO:0000314"/>
    <property type="project" value="UniProtKB"/>
</dbReference>
<dbReference type="GO" id="GO:0015349">
    <property type="term" value="F:thyroid hormone transmembrane transporter activity"/>
    <property type="evidence" value="ECO:0000314"/>
    <property type="project" value="UniProtKB"/>
</dbReference>
<dbReference type="GO" id="GO:0022857">
    <property type="term" value="F:transmembrane transporter activity"/>
    <property type="evidence" value="ECO:0000318"/>
    <property type="project" value="GO_Central"/>
</dbReference>
<dbReference type="GO" id="GO:0006865">
    <property type="term" value="P:amino acid transport"/>
    <property type="evidence" value="ECO:0000304"/>
    <property type="project" value="Reactome"/>
</dbReference>
<dbReference type="GO" id="GO:0015801">
    <property type="term" value="P:aromatic amino acid transport"/>
    <property type="evidence" value="ECO:0000314"/>
    <property type="project" value="UniProtKB"/>
</dbReference>
<dbReference type="GO" id="GO:0006590">
    <property type="term" value="P:thyroid hormone generation"/>
    <property type="evidence" value="ECO:0007669"/>
    <property type="project" value="Ensembl"/>
</dbReference>
<dbReference type="GO" id="GO:0070327">
    <property type="term" value="P:thyroid hormone transport"/>
    <property type="evidence" value="ECO:0000314"/>
    <property type="project" value="UniProtKB"/>
</dbReference>
<dbReference type="GO" id="GO:0070460">
    <property type="term" value="P:thyroid-stimulating hormone secretion"/>
    <property type="evidence" value="ECO:0007669"/>
    <property type="project" value="Ensembl"/>
</dbReference>
<dbReference type="CDD" id="cd17464">
    <property type="entry name" value="MFS_MCT10"/>
    <property type="match status" value="1"/>
</dbReference>
<dbReference type="FunFam" id="1.20.1250.20:FF:000330">
    <property type="entry name" value="monocarboxylate transporter 10"/>
    <property type="match status" value="1"/>
</dbReference>
<dbReference type="FunFam" id="1.20.1250.20:FF:000156">
    <property type="entry name" value="monocarboxylate transporter 8 isoform X1"/>
    <property type="match status" value="1"/>
</dbReference>
<dbReference type="Gene3D" id="1.20.1250.20">
    <property type="entry name" value="MFS general substrate transporter like domains"/>
    <property type="match status" value="2"/>
</dbReference>
<dbReference type="InterPro" id="IPR011701">
    <property type="entry name" value="MFS"/>
</dbReference>
<dbReference type="InterPro" id="IPR020846">
    <property type="entry name" value="MFS_dom"/>
</dbReference>
<dbReference type="InterPro" id="IPR036259">
    <property type="entry name" value="MFS_trans_sf"/>
</dbReference>
<dbReference type="InterPro" id="IPR050327">
    <property type="entry name" value="Proton-linked_MCT"/>
</dbReference>
<dbReference type="PANTHER" id="PTHR11360">
    <property type="entry name" value="MONOCARBOXYLATE TRANSPORTER"/>
    <property type="match status" value="1"/>
</dbReference>
<dbReference type="PANTHER" id="PTHR11360:SF119">
    <property type="entry name" value="MONOCARBOXYLATE TRANSPORTER 10"/>
    <property type="match status" value="1"/>
</dbReference>
<dbReference type="Pfam" id="PF07690">
    <property type="entry name" value="MFS_1"/>
    <property type="match status" value="1"/>
</dbReference>
<dbReference type="SUPFAM" id="SSF103473">
    <property type="entry name" value="MFS general substrate transporter"/>
    <property type="match status" value="1"/>
</dbReference>
<dbReference type="PROSITE" id="PS50850">
    <property type="entry name" value="MFS"/>
    <property type="match status" value="1"/>
</dbReference>
<organism>
    <name type="scientific">Homo sapiens</name>
    <name type="common">Human</name>
    <dbReference type="NCBI Taxonomy" id="9606"/>
    <lineage>
        <taxon>Eukaryota</taxon>
        <taxon>Metazoa</taxon>
        <taxon>Chordata</taxon>
        <taxon>Craniata</taxon>
        <taxon>Vertebrata</taxon>
        <taxon>Euteleostomi</taxon>
        <taxon>Mammalia</taxon>
        <taxon>Eutheria</taxon>
        <taxon>Euarchontoglires</taxon>
        <taxon>Primates</taxon>
        <taxon>Haplorrhini</taxon>
        <taxon>Catarrhini</taxon>
        <taxon>Hominidae</taxon>
        <taxon>Homo</taxon>
    </lineage>
</organism>
<proteinExistence type="evidence at protein level"/>